<keyword id="KW-1185">Reference proteome</keyword>
<keyword id="KW-0687">Ribonucleoprotein</keyword>
<keyword id="KW-0689">Ribosomal protein</keyword>
<keyword id="KW-0694">RNA-binding</keyword>
<keyword id="KW-0699">rRNA-binding</keyword>
<sequence length="208" mass="22167">MCRGIIGRKIGMTGVFSDQGEYVPVTVIEAGPCVVTQIKTVETDGYSALQLGFLEKKASKINKPLAGHFKKSGGVGFAYVREMAVDDPSAYTLGQVINAELFSAGEKVHVAGLMKGRGFAGVVKRHGFAGGKDTHGCHSHRVPGSIGTSAWPSKVFKGRKLPGRYGNTRITTKNLKIFDIQPETNLILIKGAVPGSNNGLVEIRKINA</sequence>
<proteinExistence type="inferred from homology"/>
<comment type="function">
    <text evidence="1">One of the primary rRNA binding proteins, it binds directly near the 3'-end of the 23S rRNA, where it nucleates assembly of the 50S subunit.</text>
</comment>
<comment type="subunit">
    <text evidence="1">Part of the 50S ribosomal subunit. Forms a cluster with proteins L14 and L19.</text>
</comment>
<comment type="similarity">
    <text evidence="1">Belongs to the universal ribosomal protein uL3 family.</text>
</comment>
<gene>
    <name evidence="1" type="primary">rplC</name>
    <name type="ordered locus">Dole_0708</name>
</gene>
<organism>
    <name type="scientific">Desulfosudis oleivorans (strain DSM 6200 / JCM 39069 / Hxd3)</name>
    <name type="common">Desulfococcus oleovorans</name>
    <dbReference type="NCBI Taxonomy" id="96561"/>
    <lineage>
        <taxon>Bacteria</taxon>
        <taxon>Pseudomonadati</taxon>
        <taxon>Thermodesulfobacteriota</taxon>
        <taxon>Desulfobacteria</taxon>
        <taxon>Desulfobacterales</taxon>
        <taxon>Desulfosudaceae</taxon>
        <taxon>Desulfosudis</taxon>
    </lineage>
</organism>
<reference key="1">
    <citation type="submission" date="2007-10" db="EMBL/GenBank/DDBJ databases">
        <title>Complete sequence of Desulfococcus oleovorans Hxd3.</title>
        <authorList>
            <consortium name="US DOE Joint Genome Institute"/>
            <person name="Copeland A."/>
            <person name="Lucas S."/>
            <person name="Lapidus A."/>
            <person name="Barry K."/>
            <person name="Glavina del Rio T."/>
            <person name="Dalin E."/>
            <person name="Tice H."/>
            <person name="Pitluck S."/>
            <person name="Kiss H."/>
            <person name="Brettin T."/>
            <person name="Bruce D."/>
            <person name="Detter J.C."/>
            <person name="Han C."/>
            <person name="Schmutz J."/>
            <person name="Larimer F."/>
            <person name="Land M."/>
            <person name="Hauser L."/>
            <person name="Kyrpides N."/>
            <person name="Kim E."/>
            <person name="Wawrik B."/>
            <person name="Richardson P."/>
        </authorList>
    </citation>
    <scope>NUCLEOTIDE SEQUENCE [LARGE SCALE GENOMIC DNA]</scope>
    <source>
        <strain>DSM 6200 / JCM 39069 / Hxd3</strain>
    </source>
</reference>
<name>RL3_DESOH</name>
<dbReference type="EMBL" id="CP000859">
    <property type="protein sequence ID" value="ABW66518.1"/>
    <property type="molecule type" value="Genomic_DNA"/>
</dbReference>
<dbReference type="RefSeq" id="WP_012174136.1">
    <property type="nucleotide sequence ID" value="NC_009943.1"/>
</dbReference>
<dbReference type="SMR" id="A8ZV57"/>
<dbReference type="STRING" id="96561.Dole_0708"/>
<dbReference type="KEGG" id="dol:Dole_0708"/>
<dbReference type="eggNOG" id="COG0087">
    <property type="taxonomic scope" value="Bacteria"/>
</dbReference>
<dbReference type="HOGENOM" id="CLU_044142_4_1_7"/>
<dbReference type="OrthoDB" id="9806135at2"/>
<dbReference type="Proteomes" id="UP000008561">
    <property type="component" value="Chromosome"/>
</dbReference>
<dbReference type="GO" id="GO:0022625">
    <property type="term" value="C:cytosolic large ribosomal subunit"/>
    <property type="evidence" value="ECO:0007669"/>
    <property type="project" value="TreeGrafter"/>
</dbReference>
<dbReference type="GO" id="GO:0019843">
    <property type="term" value="F:rRNA binding"/>
    <property type="evidence" value="ECO:0007669"/>
    <property type="project" value="UniProtKB-UniRule"/>
</dbReference>
<dbReference type="GO" id="GO:0003735">
    <property type="term" value="F:structural constituent of ribosome"/>
    <property type="evidence" value="ECO:0007669"/>
    <property type="project" value="InterPro"/>
</dbReference>
<dbReference type="GO" id="GO:0006412">
    <property type="term" value="P:translation"/>
    <property type="evidence" value="ECO:0007669"/>
    <property type="project" value="UniProtKB-UniRule"/>
</dbReference>
<dbReference type="FunFam" id="2.40.30.10:FF:000004">
    <property type="entry name" value="50S ribosomal protein L3"/>
    <property type="match status" value="1"/>
</dbReference>
<dbReference type="FunFam" id="3.30.160.810:FF:000001">
    <property type="entry name" value="50S ribosomal protein L3"/>
    <property type="match status" value="1"/>
</dbReference>
<dbReference type="Gene3D" id="3.30.160.810">
    <property type="match status" value="1"/>
</dbReference>
<dbReference type="Gene3D" id="2.40.30.10">
    <property type="entry name" value="Translation factors"/>
    <property type="match status" value="1"/>
</dbReference>
<dbReference type="HAMAP" id="MF_01325_B">
    <property type="entry name" value="Ribosomal_uL3_B"/>
    <property type="match status" value="1"/>
</dbReference>
<dbReference type="InterPro" id="IPR000597">
    <property type="entry name" value="Ribosomal_uL3"/>
</dbReference>
<dbReference type="InterPro" id="IPR019927">
    <property type="entry name" value="Ribosomal_uL3_bac/org-type"/>
</dbReference>
<dbReference type="InterPro" id="IPR009000">
    <property type="entry name" value="Transl_B-barrel_sf"/>
</dbReference>
<dbReference type="NCBIfam" id="TIGR03625">
    <property type="entry name" value="L3_bact"/>
    <property type="match status" value="1"/>
</dbReference>
<dbReference type="PANTHER" id="PTHR11229">
    <property type="entry name" value="50S RIBOSOMAL PROTEIN L3"/>
    <property type="match status" value="1"/>
</dbReference>
<dbReference type="PANTHER" id="PTHR11229:SF16">
    <property type="entry name" value="LARGE RIBOSOMAL SUBUNIT PROTEIN UL3C"/>
    <property type="match status" value="1"/>
</dbReference>
<dbReference type="Pfam" id="PF00297">
    <property type="entry name" value="Ribosomal_L3"/>
    <property type="match status" value="1"/>
</dbReference>
<dbReference type="SUPFAM" id="SSF50447">
    <property type="entry name" value="Translation proteins"/>
    <property type="match status" value="1"/>
</dbReference>
<protein>
    <recommendedName>
        <fullName evidence="1">Large ribosomal subunit protein uL3</fullName>
    </recommendedName>
    <alternativeName>
        <fullName evidence="2">50S ribosomal protein L3</fullName>
    </alternativeName>
</protein>
<evidence type="ECO:0000255" key="1">
    <source>
        <dbReference type="HAMAP-Rule" id="MF_01325"/>
    </source>
</evidence>
<evidence type="ECO:0000305" key="2"/>
<feature type="chain" id="PRO_1000141856" description="Large ribosomal subunit protein uL3">
    <location>
        <begin position="1"/>
        <end position="208"/>
    </location>
</feature>
<accession>A8ZV57</accession>